<evidence type="ECO:0000255" key="1">
    <source>
        <dbReference type="HAMAP-Rule" id="MF_00147"/>
    </source>
</evidence>
<proteinExistence type="inferred from homology"/>
<name>TPIS_LEGPA</name>
<sequence>MRQKIVAGNWKMNGQIQQVTELVSQIEELIGFDCAAQVAVMPPSIYIPKVRDCLKTGKVVVGAQNVYPKDYGAYTGELSAPMLKDFDCRYVLVGHSERRQFFHEDENFVAQKFHHVKDHGMIPILCVGETLSERENGKTEQVIAQQVLAVSAKGKDCFRDCVVAYEPVWAIGTGKTATPEQAQKIHQFIRDLVGEINDSDAKHLTLIYGGSVNENNAKALFSMPDIDGGLVGGASLNAKQFVEIVKCIN</sequence>
<comment type="function">
    <text evidence="1">Involved in the gluconeogenesis. Catalyzes stereospecifically the conversion of dihydroxyacetone phosphate (DHAP) to D-glyceraldehyde-3-phosphate (G3P).</text>
</comment>
<comment type="catalytic activity">
    <reaction evidence="1">
        <text>D-glyceraldehyde 3-phosphate = dihydroxyacetone phosphate</text>
        <dbReference type="Rhea" id="RHEA:18585"/>
        <dbReference type="ChEBI" id="CHEBI:57642"/>
        <dbReference type="ChEBI" id="CHEBI:59776"/>
        <dbReference type="EC" id="5.3.1.1"/>
    </reaction>
</comment>
<comment type="pathway">
    <text evidence="1">Carbohydrate biosynthesis; gluconeogenesis.</text>
</comment>
<comment type="pathway">
    <text evidence="1">Carbohydrate degradation; glycolysis; D-glyceraldehyde 3-phosphate from glycerone phosphate: step 1/1.</text>
</comment>
<comment type="subunit">
    <text evidence="1">Homodimer.</text>
</comment>
<comment type="subcellular location">
    <subcellularLocation>
        <location evidence="1">Cytoplasm</location>
    </subcellularLocation>
</comment>
<comment type="similarity">
    <text evidence="1">Belongs to the triosephosphate isomerase family.</text>
</comment>
<dbReference type="EC" id="5.3.1.1" evidence="1"/>
<dbReference type="EMBL" id="CR628336">
    <property type="protein sequence ID" value="CAH13991.1"/>
    <property type="molecule type" value="Genomic_DNA"/>
</dbReference>
<dbReference type="RefSeq" id="WP_015961805.1">
    <property type="nucleotide sequence ID" value="NC_006368.1"/>
</dbReference>
<dbReference type="SMR" id="Q5X1A5"/>
<dbReference type="KEGG" id="lpp:lpp2838"/>
<dbReference type="LegioList" id="lpp2838"/>
<dbReference type="HOGENOM" id="CLU_024251_2_1_6"/>
<dbReference type="UniPathway" id="UPA00109">
    <property type="reaction ID" value="UER00189"/>
</dbReference>
<dbReference type="UniPathway" id="UPA00138"/>
<dbReference type="GO" id="GO:0005829">
    <property type="term" value="C:cytosol"/>
    <property type="evidence" value="ECO:0007669"/>
    <property type="project" value="TreeGrafter"/>
</dbReference>
<dbReference type="GO" id="GO:0004807">
    <property type="term" value="F:triose-phosphate isomerase activity"/>
    <property type="evidence" value="ECO:0007669"/>
    <property type="project" value="UniProtKB-UniRule"/>
</dbReference>
<dbReference type="GO" id="GO:0006094">
    <property type="term" value="P:gluconeogenesis"/>
    <property type="evidence" value="ECO:0007669"/>
    <property type="project" value="UniProtKB-UniRule"/>
</dbReference>
<dbReference type="GO" id="GO:0046166">
    <property type="term" value="P:glyceraldehyde-3-phosphate biosynthetic process"/>
    <property type="evidence" value="ECO:0007669"/>
    <property type="project" value="TreeGrafter"/>
</dbReference>
<dbReference type="GO" id="GO:0019563">
    <property type="term" value="P:glycerol catabolic process"/>
    <property type="evidence" value="ECO:0007669"/>
    <property type="project" value="TreeGrafter"/>
</dbReference>
<dbReference type="GO" id="GO:0006096">
    <property type="term" value="P:glycolytic process"/>
    <property type="evidence" value="ECO:0007669"/>
    <property type="project" value="UniProtKB-UniRule"/>
</dbReference>
<dbReference type="CDD" id="cd00311">
    <property type="entry name" value="TIM"/>
    <property type="match status" value="1"/>
</dbReference>
<dbReference type="FunFam" id="3.20.20.70:FF:000020">
    <property type="entry name" value="Triosephosphate isomerase"/>
    <property type="match status" value="1"/>
</dbReference>
<dbReference type="Gene3D" id="3.20.20.70">
    <property type="entry name" value="Aldolase class I"/>
    <property type="match status" value="1"/>
</dbReference>
<dbReference type="HAMAP" id="MF_00147_B">
    <property type="entry name" value="TIM_B"/>
    <property type="match status" value="1"/>
</dbReference>
<dbReference type="InterPro" id="IPR013785">
    <property type="entry name" value="Aldolase_TIM"/>
</dbReference>
<dbReference type="InterPro" id="IPR035990">
    <property type="entry name" value="TIM_sf"/>
</dbReference>
<dbReference type="InterPro" id="IPR022896">
    <property type="entry name" value="TrioseP_Isoase_bac/euk"/>
</dbReference>
<dbReference type="InterPro" id="IPR000652">
    <property type="entry name" value="Triosephosphate_isomerase"/>
</dbReference>
<dbReference type="InterPro" id="IPR020861">
    <property type="entry name" value="Triosephosphate_isomerase_AS"/>
</dbReference>
<dbReference type="NCBIfam" id="TIGR00419">
    <property type="entry name" value="tim"/>
    <property type="match status" value="1"/>
</dbReference>
<dbReference type="PANTHER" id="PTHR21139">
    <property type="entry name" value="TRIOSEPHOSPHATE ISOMERASE"/>
    <property type="match status" value="1"/>
</dbReference>
<dbReference type="PANTHER" id="PTHR21139:SF42">
    <property type="entry name" value="TRIOSEPHOSPHATE ISOMERASE"/>
    <property type="match status" value="1"/>
</dbReference>
<dbReference type="Pfam" id="PF00121">
    <property type="entry name" value="TIM"/>
    <property type="match status" value="1"/>
</dbReference>
<dbReference type="SUPFAM" id="SSF51351">
    <property type="entry name" value="Triosephosphate isomerase (TIM)"/>
    <property type="match status" value="1"/>
</dbReference>
<dbReference type="PROSITE" id="PS00171">
    <property type="entry name" value="TIM_1"/>
    <property type="match status" value="1"/>
</dbReference>
<dbReference type="PROSITE" id="PS51440">
    <property type="entry name" value="TIM_2"/>
    <property type="match status" value="1"/>
</dbReference>
<feature type="chain" id="PRO_0000307492" description="Triosephosphate isomerase">
    <location>
        <begin position="1"/>
        <end position="249"/>
    </location>
</feature>
<feature type="active site" description="Electrophile" evidence="1">
    <location>
        <position position="95"/>
    </location>
</feature>
<feature type="active site" description="Proton acceptor" evidence="1">
    <location>
        <position position="166"/>
    </location>
</feature>
<feature type="binding site" evidence="1">
    <location>
        <begin position="9"/>
        <end position="11"/>
    </location>
    <ligand>
        <name>substrate</name>
    </ligand>
</feature>
<feature type="binding site" evidence="1">
    <location>
        <position position="172"/>
    </location>
    <ligand>
        <name>substrate</name>
    </ligand>
</feature>
<feature type="binding site" evidence="1">
    <location>
        <position position="211"/>
    </location>
    <ligand>
        <name>substrate</name>
    </ligand>
</feature>
<feature type="binding site" evidence="1">
    <location>
        <begin position="232"/>
        <end position="233"/>
    </location>
    <ligand>
        <name>substrate</name>
    </ligand>
</feature>
<keyword id="KW-0963">Cytoplasm</keyword>
<keyword id="KW-0312">Gluconeogenesis</keyword>
<keyword id="KW-0324">Glycolysis</keyword>
<keyword id="KW-0413">Isomerase</keyword>
<gene>
    <name evidence="1" type="primary">tpiA</name>
    <name type="ordered locus">lpp2838</name>
</gene>
<organism>
    <name type="scientific">Legionella pneumophila (strain Paris)</name>
    <dbReference type="NCBI Taxonomy" id="297246"/>
    <lineage>
        <taxon>Bacteria</taxon>
        <taxon>Pseudomonadati</taxon>
        <taxon>Pseudomonadota</taxon>
        <taxon>Gammaproteobacteria</taxon>
        <taxon>Legionellales</taxon>
        <taxon>Legionellaceae</taxon>
        <taxon>Legionella</taxon>
    </lineage>
</organism>
<reference key="1">
    <citation type="journal article" date="2004" name="Nat. Genet.">
        <title>Evidence in the Legionella pneumophila genome for exploitation of host cell functions and high genome plasticity.</title>
        <authorList>
            <person name="Cazalet C."/>
            <person name="Rusniok C."/>
            <person name="Brueggemann H."/>
            <person name="Zidane N."/>
            <person name="Magnier A."/>
            <person name="Ma L."/>
            <person name="Tichit M."/>
            <person name="Jarraud S."/>
            <person name="Bouchier C."/>
            <person name="Vandenesch F."/>
            <person name="Kunst F."/>
            <person name="Etienne J."/>
            <person name="Glaser P."/>
            <person name="Buchrieser C."/>
        </authorList>
    </citation>
    <scope>NUCLEOTIDE SEQUENCE [LARGE SCALE GENOMIC DNA]</scope>
    <source>
        <strain>Paris</strain>
    </source>
</reference>
<accession>Q5X1A5</accession>
<protein>
    <recommendedName>
        <fullName evidence="1">Triosephosphate isomerase</fullName>
        <shortName evidence="1">TIM</shortName>
        <shortName evidence="1">TPI</shortName>
        <ecNumber evidence="1">5.3.1.1</ecNumber>
    </recommendedName>
    <alternativeName>
        <fullName evidence="1">Triose-phosphate isomerase</fullName>
    </alternativeName>
</protein>